<protein>
    <recommendedName>
        <fullName>Pyrokinin-4</fullName>
    </recommendedName>
    <alternativeName>
        <fullName>YXPRL-amide</fullName>
    </alternativeName>
</protein>
<name>PPK4_PSEFO</name>
<accession>P84418</accession>
<evidence type="ECO:0000250" key="1">
    <source>
        <dbReference type="UniProtKB" id="P82619"/>
    </source>
</evidence>
<evidence type="ECO:0000255" key="2"/>
<evidence type="ECO:0000269" key="3">
    <source>
    </source>
</evidence>
<evidence type="ECO:0000305" key="4"/>
<keyword id="KW-0027">Amidation</keyword>
<keyword id="KW-0903">Direct protein sequencing</keyword>
<keyword id="KW-0527">Neuropeptide</keyword>
<keyword id="KW-0964">Secreted</keyword>
<comment type="function">
    <text evidence="1">Mediates visceral muscle contractile activity (myotropic activity).</text>
</comment>
<comment type="subcellular location">
    <subcellularLocation>
        <location evidence="4">Secreted</location>
    </subcellularLocation>
</comment>
<comment type="mass spectrometry" mass="1447.7" method="MALDI" evidence="3"/>
<comment type="similarity">
    <text evidence="2">Belongs to the pyrokinin family.</text>
</comment>
<dbReference type="GO" id="GO:0005576">
    <property type="term" value="C:extracellular region"/>
    <property type="evidence" value="ECO:0007669"/>
    <property type="project" value="UniProtKB-SubCell"/>
</dbReference>
<dbReference type="GO" id="GO:0007218">
    <property type="term" value="P:neuropeptide signaling pathway"/>
    <property type="evidence" value="ECO:0007669"/>
    <property type="project" value="UniProtKB-KW"/>
</dbReference>
<proteinExistence type="evidence at protein level"/>
<reference evidence="4" key="1">
    <citation type="journal article" date="2005" name="Peptides">
        <title>Peptidomics of neurohemal organs from species of the cockroach family Blattidae: how do neuropeptides of closely related species differ?</title>
        <authorList>
            <person name="Predel R."/>
            <person name="Gaede G."/>
        </authorList>
    </citation>
    <scope>PROTEIN SEQUENCE</scope>
    <scope>MASS SPECTROMETRY</scope>
    <scope>AMIDATION AT LEU-12</scope>
    <source>
        <tissue evidence="3">Corpora allata</tissue>
    </source>
</reference>
<organism>
    <name type="scientific">Pseudoderopeltis foveolata</name>
    <name type="common">Cockroach</name>
    <dbReference type="NCBI Taxonomy" id="303879"/>
    <lineage>
        <taxon>Eukaryota</taxon>
        <taxon>Metazoa</taxon>
        <taxon>Ecdysozoa</taxon>
        <taxon>Arthropoda</taxon>
        <taxon>Hexapoda</taxon>
        <taxon>Insecta</taxon>
        <taxon>Pterygota</taxon>
        <taxon>Neoptera</taxon>
        <taxon>Polyneoptera</taxon>
        <taxon>Dictyoptera</taxon>
        <taxon>Blattodea</taxon>
        <taxon>Blattoidea</taxon>
        <taxon>Blattidae</taxon>
        <taxon>Blattinae</taxon>
        <taxon>Pseudoderopeltis</taxon>
    </lineage>
</organism>
<feature type="peptide" id="PRO_0000044337" description="Pyrokinin-4">
    <location>
        <begin position="1"/>
        <end position="12"/>
    </location>
</feature>
<feature type="modified residue" description="Leucine amide" evidence="3">
    <location>
        <position position="12"/>
    </location>
</feature>
<sequence length="12" mass="1449">DHLPHDVYSPRL</sequence>